<organism>
    <name type="scientific">Streptococcus pyogenes serotype M3 (strain SSI-1)</name>
    <dbReference type="NCBI Taxonomy" id="193567"/>
    <lineage>
        <taxon>Bacteria</taxon>
        <taxon>Bacillati</taxon>
        <taxon>Bacillota</taxon>
        <taxon>Bacilli</taxon>
        <taxon>Lactobacillales</taxon>
        <taxon>Streptococcaceae</taxon>
        <taxon>Streptococcus</taxon>
    </lineage>
</organism>
<sequence length="435" mass="47356">MSIITDVYAREVLDSRGNPTLEVEVYTESGAFGRGMVPSGASTGEHEAVELRDGDKSRYLGLGTQKAVDNVNNIIAEAIIGYDVRDQQAIDRAMIALDGTPNKGKLGANAILGVSIAVARAAADYLEVPLYTYLGGFNTKVLPTPMMNIINGGSHSDAPIAFQEFMIMPVGAPTFKEGLRWGAEVFHALKKILKERGLVTAVGDEGGFAPKFEGTEDGVETILKAIEAAGYEAGENGIMIGFDCASSEFYDKERKVYDYTKFEGEGAAVRTSAEQVDYLEELVNKYPIITIEDGMDENDWDGWKVLTERLGKRVQLVGDDFFVTNTEYLARGIKENAANSILIKVNQIGTLTETFEAIEMAKEAGYTAVVSHRSGETEDSTIADIAVATNAGQIKTGSLSRTDRIAKYNQLLRIEDQLGEVAQYKGIKSFYNLKK</sequence>
<proteinExistence type="inferred from homology"/>
<keyword id="KW-0963">Cytoplasm</keyword>
<keyword id="KW-0324">Glycolysis</keyword>
<keyword id="KW-0456">Lyase</keyword>
<keyword id="KW-0460">Magnesium</keyword>
<keyword id="KW-0479">Metal-binding</keyword>
<keyword id="KW-0964">Secreted</keyword>
<name>ENO_STRPQ</name>
<protein>
    <recommendedName>
        <fullName evidence="2">Enolase</fullName>
        <ecNumber evidence="2">4.2.1.11</ecNumber>
    </recommendedName>
    <alternativeName>
        <fullName evidence="2">2-phospho-D-glycerate hydro-lyase</fullName>
    </alternativeName>
    <alternativeName>
        <fullName evidence="2">2-phosphoglycerate dehydratase</fullName>
    </alternativeName>
</protein>
<evidence type="ECO:0000250" key="1"/>
<evidence type="ECO:0000255" key="2">
    <source>
        <dbReference type="HAMAP-Rule" id="MF_00318"/>
    </source>
</evidence>
<reference key="1">
    <citation type="journal article" date="2003" name="Genome Res.">
        <title>Genome sequence of an M3 strain of Streptococcus pyogenes reveals a large-scale genomic rearrangement in invasive strains and new insights into phage evolution.</title>
        <authorList>
            <person name="Nakagawa I."/>
            <person name="Kurokawa K."/>
            <person name="Yamashita A."/>
            <person name="Nakata M."/>
            <person name="Tomiyasu Y."/>
            <person name="Okahashi N."/>
            <person name="Kawabata S."/>
            <person name="Yamazaki K."/>
            <person name="Shiba T."/>
            <person name="Yasunaga T."/>
            <person name="Hayashi H."/>
            <person name="Hattori M."/>
            <person name="Hamada S."/>
        </authorList>
    </citation>
    <scope>NUCLEOTIDE SEQUENCE [LARGE SCALE GENOMIC DNA]</scope>
    <source>
        <strain>SSI-1</strain>
    </source>
</reference>
<comment type="function">
    <text evidence="2">Catalyzes the reversible conversion of 2-phosphoglycerate (2-PG) into phosphoenolpyruvate (PEP). It is essential for the degradation of carbohydrates via glycolysis.</text>
</comment>
<comment type="catalytic activity">
    <reaction evidence="2">
        <text>(2R)-2-phosphoglycerate = phosphoenolpyruvate + H2O</text>
        <dbReference type="Rhea" id="RHEA:10164"/>
        <dbReference type="ChEBI" id="CHEBI:15377"/>
        <dbReference type="ChEBI" id="CHEBI:58289"/>
        <dbReference type="ChEBI" id="CHEBI:58702"/>
        <dbReference type="EC" id="4.2.1.11"/>
    </reaction>
</comment>
<comment type="cofactor">
    <cofactor evidence="2">
        <name>Mg(2+)</name>
        <dbReference type="ChEBI" id="CHEBI:18420"/>
    </cofactor>
    <text evidence="2">Binds a second Mg(2+) ion via substrate during catalysis.</text>
</comment>
<comment type="pathway">
    <text evidence="2">Carbohydrate degradation; glycolysis; pyruvate from D-glyceraldehyde 3-phosphate: step 4/5.</text>
</comment>
<comment type="subcellular location">
    <subcellularLocation>
        <location evidence="2">Cytoplasm</location>
    </subcellularLocation>
    <subcellularLocation>
        <location evidence="2">Secreted</location>
    </subcellularLocation>
    <subcellularLocation>
        <location evidence="2">Cell surface</location>
    </subcellularLocation>
    <text evidence="2">Fractions of enolase are present in both the cytoplasm and on the cell surface.</text>
</comment>
<comment type="similarity">
    <text evidence="2">Belongs to the enolase family.</text>
</comment>
<accession>P0DA95</accession>
<accession>P69950</accession>
<accession>P82479</accession>
<gene>
    <name evidence="2" type="primary">eno</name>
    <name type="ordered locus">SPs1375</name>
</gene>
<feature type="initiator methionine" description="Removed" evidence="1">
    <location>
        <position position="1"/>
    </location>
</feature>
<feature type="chain" id="PRO_0000411335" description="Enolase">
    <location>
        <begin position="2"/>
        <end position="435"/>
    </location>
</feature>
<feature type="active site" description="Proton donor" evidence="2">
    <location>
        <position position="205"/>
    </location>
</feature>
<feature type="active site" description="Proton acceptor" evidence="2">
    <location>
        <position position="344"/>
    </location>
</feature>
<feature type="binding site" evidence="2">
    <location>
        <position position="163"/>
    </location>
    <ligand>
        <name>(2R)-2-phosphoglycerate</name>
        <dbReference type="ChEBI" id="CHEBI:58289"/>
    </ligand>
</feature>
<feature type="binding site" evidence="2">
    <location>
        <position position="243"/>
    </location>
    <ligand>
        <name>Mg(2+)</name>
        <dbReference type="ChEBI" id="CHEBI:18420"/>
    </ligand>
</feature>
<feature type="binding site" evidence="2">
    <location>
        <position position="292"/>
    </location>
    <ligand>
        <name>Mg(2+)</name>
        <dbReference type="ChEBI" id="CHEBI:18420"/>
    </ligand>
</feature>
<feature type="binding site" evidence="2">
    <location>
        <position position="319"/>
    </location>
    <ligand>
        <name>Mg(2+)</name>
        <dbReference type="ChEBI" id="CHEBI:18420"/>
    </ligand>
</feature>
<feature type="binding site" evidence="2">
    <location>
        <position position="344"/>
    </location>
    <ligand>
        <name>(2R)-2-phosphoglycerate</name>
        <dbReference type="ChEBI" id="CHEBI:58289"/>
    </ligand>
</feature>
<feature type="binding site" evidence="2">
    <location>
        <position position="373"/>
    </location>
    <ligand>
        <name>(2R)-2-phosphoglycerate</name>
        <dbReference type="ChEBI" id="CHEBI:58289"/>
    </ligand>
</feature>
<feature type="binding site" evidence="2">
    <location>
        <position position="374"/>
    </location>
    <ligand>
        <name>(2R)-2-phosphoglycerate</name>
        <dbReference type="ChEBI" id="CHEBI:58289"/>
    </ligand>
</feature>
<feature type="binding site" evidence="2">
    <location>
        <position position="395"/>
    </location>
    <ligand>
        <name>(2R)-2-phosphoglycerate</name>
        <dbReference type="ChEBI" id="CHEBI:58289"/>
    </ligand>
</feature>
<dbReference type="EC" id="4.2.1.11" evidence="2"/>
<dbReference type="EMBL" id="BA000034">
    <property type="protein sequence ID" value="BAC64470.1"/>
    <property type="molecule type" value="Genomic_DNA"/>
</dbReference>
<dbReference type="RefSeq" id="WP_002985288.1">
    <property type="nucleotide sequence ID" value="NC_004606.1"/>
</dbReference>
<dbReference type="SMR" id="P0DA95"/>
<dbReference type="GeneID" id="69901134"/>
<dbReference type="KEGG" id="sps:SPs1375"/>
<dbReference type="HOGENOM" id="CLU_031223_2_1_9"/>
<dbReference type="UniPathway" id="UPA00109">
    <property type="reaction ID" value="UER00187"/>
</dbReference>
<dbReference type="GO" id="GO:0009986">
    <property type="term" value="C:cell surface"/>
    <property type="evidence" value="ECO:0007669"/>
    <property type="project" value="UniProtKB-SubCell"/>
</dbReference>
<dbReference type="GO" id="GO:0005576">
    <property type="term" value="C:extracellular region"/>
    <property type="evidence" value="ECO:0007669"/>
    <property type="project" value="UniProtKB-SubCell"/>
</dbReference>
<dbReference type="GO" id="GO:0009274">
    <property type="term" value="C:peptidoglycan-based cell wall"/>
    <property type="evidence" value="ECO:0007669"/>
    <property type="project" value="UniProtKB-ARBA"/>
</dbReference>
<dbReference type="GO" id="GO:0000015">
    <property type="term" value="C:phosphopyruvate hydratase complex"/>
    <property type="evidence" value="ECO:0007669"/>
    <property type="project" value="InterPro"/>
</dbReference>
<dbReference type="GO" id="GO:0000287">
    <property type="term" value="F:magnesium ion binding"/>
    <property type="evidence" value="ECO:0007669"/>
    <property type="project" value="UniProtKB-UniRule"/>
</dbReference>
<dbReference type="GO" id="GO:0004634">
    <property type="term" value="F:phosphopyruvate hydratase activity"/>
    <property type="evidence" value="ECO:0007669"/>
    <property type="project" value="UniProtKB-UniRule"/>
</dbReference>
<dbReference type="GO" id="GO:0006096">
    <property type="term" value="P:glycolytic process"/>
    <property type="evidence" value="ECO:0007669"/>
    <property type="project" value="UniProtKB-UniRule"/>
</dbReference>
<dbReference type="CDD" id="cd03313">
    <property type="entry name" value="enolase"/>
    <property type="match status" value="1"/>
</dbReference>
<dbReference type="FunFam" id="3.20.20.120:FF:000001">
    <property type="entry name" value="Enolase"/>
    <property type="match status" value="1"/>
</dbReference>
<dbReference type="FunFam" id="3.30.390.10:FF:000001">
    <property type="entry name" value="Enolase"/>
    <property type="match status" value="1"/>
</dbReference>
<dbReference type="Gene3D" id="3.20.20.120">
    <property type="entry name" value="Enolase-like C-terminal domain"/>
    <property type="match status" value="1"/>
</dbReference>
<dbReference type="Gene3D" id="3.30.390.10">
    <property type="entry name" value="Enolase-like, N-terminal domain"/>
    <property type="match status" value="1"/>
</dbReference>
<dbReference type="HAMAP" id="MF_00318">
    <property type="entry name" value="Enolase"/>
    <property type="match status" value="1"/>
</dbReference>
<dbReference type="InterPro" id="IPR000941">
    <property type="entry name" value="Enolase"/>
</dbReference>
<dbReference type="InterPro" id="IPR036849">
    <property type="entry name" value="Enolase-like_C_sf"/>
</dbReference>
<dbReference type="InterPro" id="IPR029017">
    <property type="entry name" value="Enolase-like_N"/>
</dbReference>
<dbReference type="InterPro" id="IPR020810">
    <property type="entry name" value="Enolase_C"/>
</dbReference>
<dbReference type="InterPro" id="IPR020809">
    <property type="entry name" value="Enolase_CS"/>
</dbReference>
<dbReference type="InterPro" id="IPR020811">
    <property type="entry name" value="Enolase_N"/>
</dbReference>
<dbReference type="NCBIfam" id="TIGR01060">
    <property type="entry name" value="eno"/>
    <property type="match status" value="1"/>
</dbReference>
<dbReference type="PANTHER" id="PTHR11902">
    <property type="entry name" value="ENOLASE"/>
    <property type="match status" value="1"/>
</dbReference>
<dbReference type="PANTHER" id="PTHR11902:SF1">
    <property type="entry name" value="ENOLASE"/>
    <property type="match status" value="1"/>
</dbReference>
<dbReference type="Pfam" id="PF00113">
    <property type="entry name" value="Enolase_C"/>
    <property type="match status" value="1"/>
</dbReference>
<dbReference type="Pfam" id="PF03952">
    <property type="entry name" value="Enolase_N"/>
    <property type="match status" value="1"/>
</dbReference>
<dbReference type="PIRSF" id="PIRSF001400">
    <property type="entry name" value="Enolase"/>
    <property type="match status" value="1"/>
</dbReference>
<dbReference type="PRINTS" id="PR00148">
    <property type="entry name" value="ENOLASE"/>
</dbReference>
<dbReference type="SFLD" id="SFLDS00001">
    <property type="entry name" value="Enolase"/>
    <property type="match status" value="1"/>
</dbReference>
<dbReference type="SFLD" id="SFLDF00002">
    <property type="entry name" value="enolase"/>
    <property type="match status" value="1"/>
</dbReference>
<dbReference type="SMART" id="SM01192">
    <property type="entry name" value="Enolase_C"/>
    <property type="match status" value="1"/>
</dbReference>
<dbReference type="SMART" id="SM01193">
    <property type="entry name" value="Enolase_N"/>
    <property type="match status" value="1"/>
</dbReference>
<dbReference type="SUPFAM" id="SSF51604">
    <property type="entry name" value="Enolase C-terminal domain-like"/>
    <property type="match status" value="1"/>
</dbReference>
<dbReference type="SUPFAM" id="SSF54826">
    <property type="entry name" value="Enolase N-terminal domain-like"/>
    <property type="match status" value="1"/>
</dbReference>
<dbReference type="PROSITE" id="PS00164">
    <property type="entry name" value="ENOLASE"/>
    <property type="match status" value="1"/>
</dbReference>